<gene>
    <name evidence="1" type="primary">psbL</name>
</gene>
<comment type="function">
    <text evidence="1">One of the components of the core complex of photosystem II (PSII). PSII is a light-driven water:plastoquinone oxidoreductase that uses light energy to abstract electrons from H(2)O, generating O(2) and a proton gradient subsequently used for ATP formation. It consists of a core antenna complex that captures photons, and an electron transfer chain that converts photonic excitation into a charge separation. This subunit is found at the monomer-monomer interface and is required for correct PSII assembly and/or dimerization.</text>
</comment>
<comment type="subunit">
    <text evidence="1">PSII is composed of 1 copy each of membrane proteins PsbA, PsbB, PsbC, PsbD, PsbE, PsbF, PsbH, PsbI, PsbJ, PsbK, PsbL, PsbM, PsbT, PsbX, PsbY, PsbZ, Psb30/Ycf12, at least 3 peripheral proteins of the oxygen-evolving complex and a large number of cofactors. It forms dimeric complexes.</text>
</comment>
<comment type="subcellular location">
    <subcellularLocation>
        <location evidence="1">Plastid</location>
        <location evidence="1">Chloroplast thylakoid membrane</location>
        <topology evidence="1">Single-pass membrane protein</topology>
    </subcellularLocation>
</comment>
<comment type="similarity">
    <text evidence="1">Belongs to the PsbL family.</text>
</comment>
<organism>
    <name type="scientific">Populus alba</name>
    <name type="common">White poplar</name>
    <dbReference type="NCBI Taxonomy" id="43335"/>
    <lineage>
        <taxon>Eukaryota</taxon>
        <taxon>Viridiplantae</taxon>
        <taxon>Streptophyta</taxon>
        <taxon>Embryophyta</taxon>
        <taxon>Tracheophyta</taxon>
        <taxon>Spermatophyta</taxon>
        <taxon>Magnoliopsida</taxon>
        <taxon>eudicotyledons</taxon>
        <taxon>Gunneridae</taxon>
        <taxon>Pentapetalae</taxon>
        <taxon>rosids</taxon>
        <taxon>fabids</taxon>
        <taxon>Malpighiales</taxon>
        <taxon>Salicaceae</taxon>
        <taxon>Saliceae</taxon>
        <taxon>Populus</taxon>
    </lineage>
</organism>
<feature type="chain" id="PRO_0000276219" description="Photosystem II reaction center protein L">
    <location>
        <begin position="1"/>
        <end position="38"/>
    </location>
</feature>
<feature type="transmembrane region" description="Helical" evidence="1">
    <location>
        <begin position="17"/>
        <end position="37"/>
    </location>
</feature>
<protein>
    <recommendedName>
        <fullName evidence="1">Photosystem II reaction center protein L</fullName>
        <shortName evidence="1">PSII-L</shortName>
    </recommendedName>
</protein>
<reference key="1">
    <citation type="submission" date="2005-03" db="EMBL/GenBank/DDBJ databases">
        <title>Complete structure of the chloroplast genome of Populus alba.</title>
        <authorList>
            <person name="Okumura S."/>
            <person name="Yamashita A."/>
            <person name="Kanamoto H."/>
            <person name="Hattori M."/>
            <person name="Takase H."/>
            <person name="Tomizawa K."/>
        </authorList>
    </citation>
    <scope>NUCLEOTIDE SEQUENCE [LARGE SCALE GENOMIC DNA]</scope>
</reference>
<evidence type="ECO:0000255" key="1">
    <source>
        <dbReference type="HAMAP-Rule" id="MF_01317"/>
    </source>
</evidence>
<sequence>MTQSNPNEQNVELNRTSLYWGLLLIFVLAVLFSNYFFN</sequence>
<dbReference type="EMBL" id="AP008956">
    <property type="protein sequence ID" value="BAE97220.1"/>
    <property type="molecule type" value="Genomic_DNA"/>
</dbReference>
<dbReference type="RefSeq" id="YP_665573.1">
    <property type="nucleotide sequence ID" value="NC_008235.1"/>
</dbReference>
<dbReference type="SMR" id="Q14FE2"/>
<dbReference type="GeneID" id="4178168"/>
<dbReference type="KEGG" id="palz:4178168"/>
<dbReference type="OrthoDB" id="3672at3646"/>
<dbReference type="GO" id="GO:0009535">
    <property type="term" value="C:chloroplast thylakoid membrane"/>
    <property type="evidence" value="ECO:0007669"/>
    <property type="project" value="UniProtKB-SubCell"/>
</dbReference>
<dbReference type="GO" id="GO:0009539">
    <property type="term" value="C:photosystem II reaction center"/>
    <property type="evidence" value="ECO:0007669"/>
    <property type="project" value="InterPro"/>
</dbReference>
<dbReference type="GO" id="GO:0015979">
    <property type="term" value="P:photosynthesis"/>
    <property type="evidence" value="ECO:0007669"/>
    <property type="project" value="UniProtKB-UniRule"/>
</dbReference>
<dbReference type="HAMAP" id="MF_01317">
    <property type="entry name" value="PSII_PsbL"/>
    <property type="match status" value="1"/>
</dbReference>
<dbReference type="InterPro" id="IPR003372">
    <property type="entry name" value="PSII_PsbL"/>
</dbReference>
<dbReference type="InterPro" id="IPR037266">
    <property type="entry name" value="PSII_PsbL_sf"/>
</dbReference>
<dbReference type="NCBIfam" id="NF001972">
    <property type="entry name" value="PRK00753.1"/>
    <property type="match status" value="1"/>
</dbReference>
<dbReference type="Pfam" id="PF02419">
    <property type="entry name" value="PsbL"/>
    <property type="match status" value="1"/>
</dbReference>
<dbReference type="SUPFAM" id="SSF161017">
    <property type="entry name" value="Photosystem II reaction center protein L, PsbL"/>
    <property type="match status" value="1"/>
</dbReference>
<proteinExistence type="inferred from homology"/>
<keyword id="KW-0150">Chloroplast</keyword>
<keyword id="KW-0472">Membrane</keyword>
<keyword id="KW-0602">Photosynthesis</keyword>
<keyword id="KW-0604">Photosystem II</keyword>
<keyword id="KW-0934">Plastid</keyword>
<keyword id="KW-0674">Reaction center</keyword>
<keyword id="KW-0793">Thylakoid</keyword>
<keyword id="KW-0812">Transmembrane</keyword>
<keyword id="KW-1133">Transmembrane helix</keyword>
<accession>Q14FE2</accession>
<geneLocation type="chloroplast"/>
<name>PSBL_POPAL</name>